<accession>A4YCT0</accession>
<name>RL14E_METS5</name>
<protein>
    <recommendedName>
        <fullName evidence="1">Large ribosomal subunit protein eL14</fullName>
    </recommendedName>
    <alternativeName>
        <fullName evidence="2">50S ribosomal protein L14e</fullName>
    </alternativeName>
</protein>
<proteinExistence type="inferred from homology"/>
<feature type="chain" id="PRO_1000072781" description="Large ribosomal subunit protein eL14">
    <location>
        <begin position="1"/>
        <end position="96"/>
    </location>
</feature>
<reference key="1">
    <citation type="journal article" date="2008" name="Appl. Environ. Microbiol.">
        <title>The genome sequence of the metal-mobilizing, extremely thermoacidophilic archaeon Metallosphaera sedula provides insights into bioleaching-associated metabolism.</title>
        <authorList>
            <person name="Auernik K.S."/>
            <person name="Maezato Y."/>
            <person name="Blum P.H."/>
            <person name="Kelly R.M."/>
        </authorList>
    </citation>
    <scope>NUCLEOTIDE SEQUENCE [LARGE SCALE GENOMIC DNA]</scope>
    <source>
        <strain>ATCC 51363 / DSM 5348 / JCM 9185 / NBRC 15509 / TH2</strain>
    </source>
</reference>
<gene>
    <name evidence="1" type="primary">rpl14e</name>
    <name type="ordered locus">Msed_0055</name>
</gene>
<evidence type="ECO:0000255" key="1">
    <source>
        <dbReference type="HAMAP-Rule" id="MF_00721"/>
    </source>
</evidence>
<evidence type="ECO:0000305" key="2"/>
<sequence>MAIIEVGRICVKLSGREAGSKCVIVDIIDNNFVLVTGPKSISGVKRRRVNISHLEPTDKTVEIGKGASDQEVEAKLKEQGLVDFMKEKVKVKIPVI</sequence>
<organism>
    <name type="scientific">Metallosphaera sedula (strain ATCC 51363 / DSM 5348 / JCM 9185 / NBRC 15509 / TH2)</name>
    <dbReference type="NCBI Taxonomy" id="399549"/>
    <lineage>
        <taxon>Archaea</taxon>
        <taxon>Thermoproteota</taxon>
        <taxon>Thermoprotei</taxon>
        <taxon>Sulfolobales</taxon>
        <taxon>Sulfolobaceae</taxon>
        <taxon>Metallosphaera</taxon>
    </lineage>
</organism>
<dbReference type="EMBL" id="CP000682">
    <property type="protein sequence ID" value="ABP94232.1"/>
    <property type="molecule type" value="Genomic_DNA"/>
</dbReference>
<dbReference type="RefSeq" id="WP_011921201.1">
    <property type="nucleotide sequence ID" value="NZ_CP139956.1"/>
</dbReference>
<dbReference type="SMR" id="A4YCT0"/>
<dbReference type="STRING" id="399549.Msed_0055"/>
<dbReference type="KEGG" id="mse:Msed_0055"/>
<dbReference type="eggNOG" id="arCOG04167">
    <property type="taxonomic scope" value="Archaea"/>
</dbReference>
<dbReference type="HOGENOM" id="CLU_183474_0_0_2"/>
<dbReference type="Proteomes" id="UP000000242">
    <property type="component" value="Chromosome"/>
</dbReference>
<dbReference type="GO" id="GO:0022625">
    <property type="term" value="C:cytosolic large ribosomal subunit"/>
    <property type="evidence" value="ECO:0007669"/>
    <property type="project" value="TreeGrafter"/>
</dbReference>
<dbReference type="GO" id="GO:0003723">
    <property type="term" value="F:RNA binding"/>
    <property type="evidence" value="ECO:0007669"/>
    <property type="project" value="InterPro"/>
</dbReference>
<dbReference type="GO" id="GO:0003735">
    <property type="term" value="F:structural constituent of ribosome"/>
    <property type="evidence" value="ECO:0007669"/>
    <property type="project" value="InterPro"/>
</dbReference>
<dbReference type="GO" id="GO:0042273">
    <property type="term" value="P:ribosomal large subunit biogenesis"/>
    <property type="evidence" value="ECO:0007669"/>
    <property type="project" value="TreeGrafter"/>
</dbReference>
<dbReference type="GO" id="GO:0006412">
    <property type="term" value="P:translation"/>
    <property type="evidence" value="ECO:0007669"/>
    <property type="project" value="UniProtKB-UniRule"/>
</dbReference>
<dbReference type="CDD" id="cd23702">
    <property type="entry name" value="eL14"/>
    <property type="match status" value="1"/>
</dbReference>
<dbReference type="FunFam" id="2.30.30.30:FF:000045">
    <property type="entry name" value="50S ribosomal protein L14e"/>
    <property type="match status" value="1"/>
</dbReference>
<dbReference type="Gene3D" id="2.30.30.30">
    <property type="match status" value="1"/>
</dbReference>
<dbReference type="HAMAP" id="MF_00721">
    <property type="entry name" value="Ribosomal_eL14"/>
    <property type="match status" value="1"/>
</dbReference>
<dbReference type="InterPro" id="IPR005824">
    <property type="entry name" value="KOW"/>
</dbReference>
<dbReference type="InterPro" id="IPR014722">
    <property type="entry name" value="Rib_uL2_dom2"/>
</dbReference>
<dbReference type="InterPro" id="IPR039660">
    <property type="entry name" value="Ribosomal_eL14"/>
</dbReference>
<dbReference type="InterPro" id="IPR023651">
    <property type="entry name" value="Ribosomal_eL14_arc"/>
</dbReference>
<dbReference type="InterPro" id="IPR008991">
    <property type="entry name" value="Translation_prot_SH3-like_sf"/>
</dbReference>
<dbReference type="NCBIfam" id="NF003320">
    <property type="entry name" value="PRK04333.1"/>
    <property type="match status" value="1"/>
</dbReference>
<dbReference type="PANTHER" id="PTHR11127">
    <property type="entry name" value="60S RIBOSOMAL PROTEIN L14"/>
    <property type="match status" value="1"/>
</dbReference>
<dbReference type="PANTHER" id="PTHR11127:SF2">
    <property type="entry name" value="LARGE RIBOSOMAL SUBUNIT PROTEIN EL14"/>
    <property type="match status" value="1"/>
</dbReference>
<dbReference type="Pfam" id="PF00467">
    <property type="entry name" value="KOW"/>
    <property type="match status" value="1"/>
</dbReference>
<dbReference type="SUPFAM" id="SSF50104">
    <property type="entry name" value="Translation proteins SH3-like domain"/>
    <property type="match status" value="1"/>
</dbReference>
<keyword id="KW-1185">Reference proteome</keyword>
<keyword id="KW-0687">Ribonucleoprotein</keyword>
<keyword id="KW-0689">Ribosomal protein</keyword>
<comment type="similarity">
    <text evidence="1">Belongs to the eukaryotic ribosomal protein eL14 family.</text>
</comment>